<gene>
    <name evidence="7" type="primary">RKM3</name>
    <name evidence="8" type="ordered locus">YBR030W</name>
    <name type="ORF">YBR0314</name>
</gene>
<reference key="1">
    <citation type="journal article" date="1994" name="Yeast">
        <title>The complete sequence of a 33 kb fragment on the right arm of chromosome II from Saccharomyces cerevisiae reveals 16 open reading frames, including ten new open reading frames, five previously identified genes and a homologue of the SCO1 gene.</title>
        <authorList>
            <person name="Smits P.H.M."/>
            <person name="de Haan M."/>
            <person name="Maat C."/>
            <person name="Grivell L.A."/>
        </authorList>
    </citation>
    <scope>NUCLEOTIDE SEQUENCE [GENOMIC DNA]</scope>
    <source>
        <strain>ATCC 204508 / S288c</strain>
    </source>
</reference>
<reference key="2">
    <citation type="journal article" date="1994" name="EMBO J.">
        <title>Complete DNA sequence of yeast chromosome II.</title>
        <authorList>
            <person name="Feldmann H."/>
            <person name="Aigle M."/>
            <person name="Aljinovic G."/>
            <person name="Andre B."/>
            <person name="Baclet M.C."/>
            <person name="Barthe C."/>
            <person name="Baur A."/>
            <person name="Becam A.-M."/>
            <person name="Biteau N."/>
            <person name="Boles E."/>
            <person name="Brandt T."/>
            <person name="Brendel M."/>
            <person name="Brueckner M."/>
            <person name="Bussereau F."/>
            <person name="Christiansen C."/>
            <person name="Contreras R."/>
            <person name="Crouzet M."/>
            <person name="Cziepluch C."/>
            <person name="Demolis N."/>
            <person name="Delaveau T."/>
            <person name="Doignon F."/>
            <person name="Domdey H."/>
            <person name="Duesterhus S."/>
            <person name="Dubois E."/>
            <person name="Dujon B."/>
            <person name="El Bakkoury M."/>
            <person name="Entian K.-D."/>
            <person name="Feuermann M."/>
            <person name="Fiers W."/>
            <person name="Fobo G.M."/>
            <person name="Fritz C."/>
            <person name="Gassenhuber J."/>
            <person name="Glansdorff N."/>
            <person name="Goffeau A."/>
            <person name="Grivell L.A."/>
            <person name="de Haan M."/>
            <person name="Hein C."/>
            <person name="Herbert C.J."/>
            <person name="Hollenberg C.P."/>
            <person name="Holmstroem K."/>
            <person name="Jacq C."/>
            <person name="Jacquet M."/>
            <person name="Jauniaux J.-C."/>
            <person name="Jonniaux J.-L."/>
            <person name="Kallesoee T."/>
            <person name="Kiesau P."/>
            <person name="Kirchrath L."/>
            <person name="Koetter P."/>
            <person name="Korol S."/>
            <person name="Liebl S."/>
            <person name="Logghe M."/>
            <person name="Lohan A.J.E."/>
            <person name="Louis E.J."/>
            <person name="Li Z.Y."/>
            <person name="Maat M.J."/>
            <person name="Mallet L."/>
            <person name="Mannhaupt G."/>
            <person name="Messenguy F."/>
            <person name="Miosga T."/>
            <person name="Molemans F."/>
            <person name="Mueller S."/>
            <person name="Nasr F."/>
            <person name="Obermaier B."/>
            <person name="Perea J."/>
            <person name="Pierard A."/>
            <person name="Piravandi E."/>
            <person name="Pohl F.M."/>
            <person name="Pohl T.M."/>
            <person name="Potier S."/>
            <person name="Proft M."/>
            <person name="Purnelle B."/>
            <person name="Ramezani Rad M."/>
            <person name="Rieger M."/>
            <person name="Rose M."/>
            <person name="Schaaff-Gerstenschlaeger I."/>
            <person name="Scherens B."/>
            <person name="Schwarzlose C."/>
            <person name="Skala J."/>
            <person name="Slonimski P.P."/>
            <person name="Smits P.H.M."/>
            <person name="Souciet J.-L."/>
            <person name="Steensma H.Y."/>
            <person name="Stucka R."/>
            <person name="Urrestarazu L.A."/>
            <person name="van der Aart Q.J.M."/>
            <person name="Van Dyck L."/>
            <person name="Vassarotti A."/>
            <person name="Vetter I."/>
            <person name="Vierendeels F."/>
            <person name="Vissers S."/>
            <person name="Wagner G."/>
            <person name="de Wergifosse P."/>
            <person name="Wolfe K.H."/>
            <person name="Zagulski M."/>
            <person name="Zimmermann F.K."/>
            <person name="Mewes H.-W."/>
            <person name="Kleine K."/>
        </authorList>
    </citation>
    <scope>NUCLEOTIDE SEQUENCE [LARGE SCALE GENOMIC DNA]</scope>
    <source>
        <strain>ATCC 204508 / S288c</strain>
    </source>
</reference>
<reference key="3">
    <citation type="journal article" date="2014" name="G3 (Bethesda)">
        <title>The reference genome sequence of Saccharomyces cerevisiae: Then and now.</title>
        <authorList>
            <person name="Engel S.R."/>
            <person name="Dietrich F.S."/>
            <person name="Fisk D.G."/>
            <person name="Binkley G."/>
            <person name="Balakrishnan R."/>
            <person name="Costanzo M.C."/>
            <person name="Dwight S.S."/>
            <person name="Hitz B.C."/>
            <person name="Karra K."/>
            <person name="Nash R.S."/>
            <person name="Weng S."/>
            <person name="Wong E.D."/>
            <person name="Lloyd P."/>
            <person name="Skrzypek M.S."/>
            <person name="Miyasato S.R."/>
            <person name="Simison M."/>
            <person name="Cherry J.M."/>
        </authorList>
    </citation>
    <scope>GENOME REANNOTATION</scope>
    <source>
        <strain>ATCC 204508 / S288c</strain>
    </source>
</reference>
<reference key="4">
    <citation type="journal article" date="2003" name="Nature">
        <title>Global analysis of protein localization in budding yeast.</title>
        <authorList>
            <person name="Huh W.-K."/>
            <person name="Falvo J.V."/>
            <person name="Gerke L.C."/>
            <person name="Carroll A.S."/>
            <person name="Howson R.W."/>
            <person name="Weissman J.S."/>
            <person name="O'Shea E.K."/>
        </authorList>
    </citation>
    <scope>SUBCELLULAR LOCATION [LARGE SCALE ANALYSIS]</scope>
</reference>
<reference key="5">
    <citation type="journal article" date="2003" name="Nature">
        <title>Global analysis of protein expression in yeast.</title>
        <authorList>
            <person name="Ghaemmaghami S."/>
            <person name="Huh W.-K."/>
            <person name="Bower K."/>
            <person name="Howson R.W."/>
            <person name="Belle A."/>
            <person name="Dephoure N."/>
            <person name="O'Shea E.K."/>
            <person name="Weissman J.S."/>
        </authorList>
    </citation>
    <scope>LEVEL OF PROTEIN EXPRESSION [LARGE SCALE ANALYSIS]</scope>
</reference>
<reference key="6">
    <citation type="journal article" date="2008" name="J. Biol. Chem.">
        <title>Identification of two SET domain proteins required for methylation of lysine residues in yeast ribosomal protein Rpl42ab.</title>
        <authorList>
            <person name="Webb K.J."/>
            <person name="Laganowsky A."/>
            <person name="Whitelegge J.P."/>
            <person name="Clarke S.G."/>
        </authorList>
    </citation>
    <scope>FUNCTION</scope>
</reference>
<reference key="7">
    <citation type="journal article" date="2014" name="J. Proteome Res.">
        <title>Stoichiometry of Saccharomyces cerevisiae lysine methylation: insights into non-histone protein lysine methyltransferase activity.</title>
        <authorList>
            <person name="Hart-Smith G."/>
            <person name="Chia S.Z."/>
            <person name="Low J.K."/>
            <person name="McKay M.J."/>
            <person name="Molloy M.P."/>
            <person name="Wilkins M.R."/>
        </authorList>
    </citation>
    <scope>FUNCTION</scope>
</reference>
<keyword id="KW-0489">Methyltransferase</keyword>
<keyword id="KW-0539">Nucleus</keyword>
<keyword id="KW-1185">Reference proteome</keyword>
<keyword id="KW-0949">S-adenosyl-L-methionine</keyword>
<keyword id="KW-0808">Transferase</keyword>
<comment type="function">
    <text evidence="5 6">S-adenosyl-L-methionine-dependent protein-lysine N-methyltransferase that monomethylates 60S ribosomal protein L42 (RPL42A and RPL42B) at 'Lys-40'.</text>
</comment>
<comment type="subcellular location">
    <subcellularLocation>
        <location evidence="3">Nucleus</location>
    </subcellularLocation>
</comment>
<comment type="miscellaneous">
    <text evidence="4">Present with 7880 molecules/cell in log phase SD medium.</text>
</comment>
<comment type="similarity">
    <text evidence="1">Belongs to the class V-like SAM-binding methyltransferase superfamily.</text>
</comment>
<proteinExistence type="evidence at protein level"/>
<dbReference type="EC" id="2.1.1.-" evidence="5 6"/>
<dbReference type="EMBL" id="Z35899">
    <property type="protein sequence ID" value="CAA84972.1"/>
    <property type="molecule type" value="Genomic_DNA"/>
</dbReference>
<dbReference type="EMBL" id="X76078">
    <property type="protein sequence ID" value="CAA53686.1"/>
    <property type="molecule type" value="Genomic_DNA"/>
</dbReference>
<dbReference type="EMBL" id="BK006936">
    <property type="protein sequence ID" value="DAA07151.1"/>
    <property type="molecule type" value="Genomic_DNA"/>
</dbReference>
<dbReference type="PIR" id="S45886">
    <property type="entry name" value="S45886"/>
</dbReference>
<dbReference type="RefSeq" id="NP_009586.1">
    <property type="nucleotide sequence ID" value="NM_001178378.1"/>
</dbReference>
<dbReference type="BioGRID" id="32732">
    <property type="interactions" value="114"/>
</dbReference>
<dbReference type="FunCoup" id="P38222">
    <property type="interactions" value="209"/>
</dbReference>
<dbReference type="IntAct" id="P38222">
    <property type="interactions" value="6"/>
</dbReference>
<dbReference type="MINT" id="P38222"/>
<dbReference type="STRING" id="4932.YBR030W"/>
<dbReference type="iPTMnet" id="P38222"/>
<dbReference type="PaxDb" id="4932-YBR030W"/>
<dbReference type="PeptideAtlas" id="P38222"/>
<dbReference type="EnsemblFungi" id="YBR030W_mRNA">
    <property type="protein sequence ID" value="YBR030W"/>
    <property type="gene ID" value="YBR030W"/>
</dbReference>
<dbReference type="GeneID" id="852318"/>
<dbReference type="KEGG" id="sce:YBR030W"/>
<dbReference type="AGR" id="SGD:S000000234"/>
<dbReference type="SGD" id="S000000234">
    <property type="gene designation" value="RKM3"/>
</dbReference>
<dbReference type="VEuPathDB" id="FungiDB:YBR030W"/>
<dbReference type="eggNOG" id="KOG1337">
    <property type="taxonomic scope" value="Eukaryota"/>
</dbReference>
<dbReference type="GeneTree" id="ENSGT00940000153577"/>
<dbReference type="HOGENOM" id="CLU_033565_1_0_1"/>
<dbReference type="InParanoid" id="P38222"/>
<dbReference type="OMA" id="EVDAYHE"/>
<dbReference type="OrthoDB" id="441812at2759"/>
<dbReference type="BioCyc" id="YEAST:G3O-29008-MONOMER"/>
<dbReference type="BioGRID-ORCS" id="852318">
    <property type="hits" value="0 hits in 10 CRISPR screens"/>
</dbReference>
<dbReference type="PRO" id="PR:P38222"/>
<dbReference type="Proteomes" id="UP000002311">
    <property type="component" value="Chromosome II"/>
</dbReference>
<dbReference type="RNAct" id="P38222">
    <property type="molecule type" value="protein"/>
</dbReference>
<dbReference type="GO" id="GO:0005829">
    <property type="term" value="C:cytosol"/>
    <property type="evidence" value="ECO:0000314"/>
    <property type="project" value="SGD"/>
</dbReference>
<dbReference type="GO" id="GO:0005634">
    <property type="term" value="C:nucleus"/>
    <property type="evidence" value="ECO:0000314"/>
    <property type="project" value="SGD"/>
</dbReference>
<dbReference type="GO" id="GO:0016279">
    <property type="term" value="F:protein-lysine N-methyltransferase activity"/>
    <property type="evidence" value="ECO:0000315"/>
    <property type="project" value="SGD"/>
</dbReference>
<dbReference type="GO" id="GO:0032259">
    <property type="term" value="P:methylation"/>
    <property type="evidence" value="ECO:0007669"/>
    <property type="project" value="UniProtKB-KW"/>
</dbReference>
<dbReference type="CDD" id="cd10527">
    <property type="entry name" value="SET_LSMT"/>
    <property type="match status" value="1"/>
</dbReference>
<dbReference type="FunFam" id="3.90.1410.10:FF:000017">
    <property type="entry name" value="YBR030W-like protein"/>
    <property type="match status" value="1"/>
</dbReference>
<dbReference type="Gene3D" id="3.90.1410.10">
    <property type="entry name" value="set domain protein methyltransferase, domain 1"/>
    <property type="match status" value="1"/>
</dbReference>
<dbReference type="InterPro" id="IPR001214">
    <property type="entry name" value="SET_dom"/>
</dbReference>
<dbReference type="InterPro" id="IPR046341">
    <property type="entry name" value="SET_dom_sf"/>
</dbReference>
<dbReference type="InterPro" id="IPR050600">
    <property type="entry name" value="SETD3_SETD6_MTase"/>
</dbReference>
<dbReference type="PANTHER" id="PTHR13271:SF128">
    <property type="entry name" value="RIBOSOMAL LYSINE N-METHYLTRANSFERASE 3"/>
    <property type="match status" value="1"/>
</dbReference>
<dbReference type="PANTHER" id="PTHR13271">
    <property type="entry name" value="UNCHARACTERIZED PUTATIVE METHYLTRANSFERASE"/>
    <property type="match status" value="1"/>
</dbReference>
<dbReference type="SUPFAM" id="SSF82199">
    <property type="entry name" value="SET domain"/>
    <property type="match status" value="2"/>
</dbReference>
<dbReference type="PROSITE" id="PS50280">
    <property type="entry name" value="SET"/>
    <property type="match status" value="1"/>
</dbReference>
<accession>P38222</accession>
<accession>D6VQ31</accession>
<feature type="chain" id="PRO_0000202472" description="Ribosomal lysine N-methyltransferase 3">
    <location>
        <begin position="1"/>
        <end position="552"/>
    </location>
</feature>
<feature type="domain" description="SET" evidence="1">
    <location>
        <begin position="26"/>
        <end position="335"/>
    </location>
</feature>
<feature type="region of interest" description="Disordered" evidence="2">
    <location>
        <begin position="399"/>
        <end position="432"/>
    </location>
</feature>
<feature type="compositionally biased region" description="Acidic residues" evidence="2">
    <location>
        <begin position="413"/>
        <end position="432"/>
    </location>
</feature>
<feature type="binding site" evidence="1">
    <location>
        <position position="334"/>
    </location>
    <ligand>
        <name>S-adenosyl-L-methionine</name>
        <dbReference type="ChEBI" id="CHEBI:59789"/>
    </ligand>
</feature>
<protein>
    <recommendedName>
        <fullName evidence="7">Ribosomal lysine N-methyltransferase 3</fullName>
        <ecNumber evidence="5 6">2.1.1.-</ecNumber>
    </recommendedName>
</protein>
<evidence type="ECO:0000255" key="1">
    <source>
        <dbReference type="PROSITE-ProRule" id="PRU00190"/>
    </source>
</evidence>
<evidence type="ECO:0000256" key="2">
    <source>
        <dbReference type="SAM" id="MobiDB-lite"/>
    </source>
</evidence>
<evidence type="ECO:0000269" key="3">
    <source>
    </source>
</evidence>
<evidence type="ECO:0000269" key="4">
    <source>
    </source>
</evidence>
<evidence type="ECO:0000269" key="5">
    <source>
    </source>
</evidence>
<evidence type="ECO:0000269" key="6">
    <source>
    </source>
</evidence>
<evidence type="ECO:0000303" key="7">
    <source>
    </source>
</evidence>
<evidence type="ECO:0000312" key="8">
    <source>
        <dbReference type="SGD" id="S000000234"/>
    </source>
</evidence>
<organism>
    <name type="scientific">Saccharomyces cerevisiae (strain ATCC 204508 / S288c)</name>
    <name type="common">Baker's yeast</name>
    <dbReference type="NCBI Taxonomy" id="559292"/>
    <lineage>
        <taxon>Eukaryota</taxon>
        <taxon>Fungi</taxon>
        <taxon>Dikarya</taxon>
        <taxon>Ascomycota</taxon>
        <taxon>Saccharomycotina</taxon>
        <taxon>Saccharomycetes</taxon>
        <taxon>Saccharomycetales</taxon>
        <taxon>Saccharomycetaceae</taxon>
        <taxon>Saccharomyces</taxon>
    </lineage>
</organism>
<name>RKM3_YEAST</name>
<sequence>MSVTFKDDVHRILKFVANCNGRFEDSKCDIRESPLGGLGVFAKTDIAEGESILTLNKSSIFSASNSSIANLLCDSSIDGMLALNIAFIYETTVFRNSSHWYPFLRTIRIRDDEGHLNLPPSFWHADAKRLLKGTSFDTLFDSLAPEEEIMEGFEIAVDLAHKWNDEFGLEIPKGFLDVSEENHEEDYNLKLEKFISVAYTLSSRGFEIDAYHETALVPIADLFNHHVSDPDLKFVSLYDVCDKCGEPDMCKHLIAEEYLEAENLDKNMPKVASMETRVIDEDLIKSLENDLEKEYSNVTANIEDDDGGIENPDECVDLVLKNDVAQGQEIFNSYGELSNVFLLARYGFTVPENQYDIVHLGPDFMKILKKEEKYQEKVKWWSQVGHGLFSAWYAQMRQEDEEDEDGQAKSDNLSDDIESEEEEEEEEGDDSLESWLSQLYIDSSGEPSPSTWALANLLTLTAVQWESLFSKKATPHISDSIVNEEKLPFLAKKDNPHSKKLLSNLLKEKQLPCIKGDNSSKITSATKSMLQNARTLVQSEHNILDRCLKRLS</sequence>